<proteinExistence type="inferred from homology"/>
<reference key="1">
    <citation type="journal article" date="2011" name="J. Bacteriol.">
        <title>Genome sequence of the verrucomicrobium Opitutus terrae PB90-1, an abundant inhabitant of rice paddy soil ecosystems.</title>
        <authorList>
            <person name="van Passel M.W."/>
            <person name="Kant R."/>
            <person name="Palva A."/>
            <person name="Copeland A."/>
            <person name="Lucas S."/>
            <person name="Lapidus A."/>
            <person name="Glavina del Rio T."/>
            <person name="Pitluck S."/>
            <person name="Goltsman E."/>
            <person name="Clum A."/>
            <person name="Sun H."/>
            <person name="Schmutz J."/>
            <person name="Larimer F.W."/>
            <person name="Land M.L."/>
            <person name="Hauser L."/>
            <person name="Kyrpides N."/>
            <person name="Mikhailova N."/>
            <person name="Richardson P.P."/>
            <person name="Janssen P.H."/>
            <person name="de Vos W.M."/>
            <person name="Smidt H."/>
        </authorList>
    </citation>
    <scope>NUCLEOTIDE SEQUENCE [LARGE SCALE GENOMIC DNA]</scope>
    <source>
        <strain>DSM 11246 / JCM 15787 / PB90-1</strain>
    </source>
</reference>
<keyword id="KW-0450">Lipoyl</keyword>
<keyword id="KW-1185">Reference proteome</keyword>
<sequence>MSNVPADLRYAKSHEWLKLEADGTATIGITDYAQSSLGDITYVQLPKVGAALKAGETFGVVESVKAASDLYAPAGGTVVAVNAELDSAPDAVNRAPYAEGWMLKLKLANPADANALLNAADYGKLLG</sequence>
<dbReference type="EMBL" id="CP001032">
    <property type="protein sequence ID" value="ACB76640.1"/>
    <property type="molecule type" value="Genomic_DNA"/>
</dbReference>
<dbReference type="RefSeq" id="WP_012376169.1">
    <property type="nucleotide sequence ID" value="NC_010571.1"/>
</dbReference>
<dbReference type="SMR" id="B1ZU74"/>
<dbReference type="STRING" id="452637.Oter_3363"/>
<dbReference type="KEGG" id="ote:Oter_3363"/>
<dbReference type="eggNOG" id="COG0509">
    <property type="taxonomic scope" value="Bacteria"/>
</dbReference>
<dbReference type="HOGENOM" id="CLU_097408_2_2_0"/>
<dbReference type="OrthoDB" id="9796712at2"/>
<dbReference type="Proteomes" id="UP000007013">
    <property type="component" value="Chromosome"/>
</dbReference>
<dbReference type="GO" id="GO:0005829">
    <property type="term" value="C:cytosol"/>
    <property type="evidence" value="ECO:0007669"/>
    <property type="project" value="TreeGrafter"/>
</dbReference>
<dbReference type="GO" id="GO:0005960">
    <property type="term" value="C:glycine cleavage complex"/>
    <property type="evidence" value="ECO:0007669"/>
    <property type="project" value="InterPro"/>
</dbReference>
<dbReference type="GO" id="GO:0019464">
    <property type="term" value="P:glycine decarboxylation via glycine cleavage system"/>
    <property type="evidence" value="ECO:0007669"/>
    <property type="project" value="UniProtKB-UniRule"/>
</dbReference>
<dbReference type="CDD" id="cd06848">
    <property type="entry name" value="GCS_H"/>
    <property type="match status" value="1"/>
</dbReference>
<dbReference type="Gene3D" id="2.40.50.100">
    <property type="match status" value="1"/>
</dbReference>
<dbReference type="HAMAP" id="MF_00272">
    <property type="entry name" value="GcvH"/>
    <property type="match status" value="1"/>
</dbReference>
<dbReference type="InterPro" id="IPR003016">
    <property type="entry name" value="2-oxoA_DH_lipoyl-BS"/>
</dbReference>
<dbReference type="InterPro" id="IPR000089">
    <property type="entry name" value="Biotin_lipoyl"/>
</dbReference>
<dbReference type="InterPro" id="IPR002930">
    <property type="entry name" value="GCV_H"/>
</dbReference>
<dbReference type="InterPro" id="IPR033753">
    <property type="entry name" value="GCV_H/Fam206"/>
</dbReference>
<dbReference type="InterPro" id="IPR017453">
    <property type="entry name" value="GCV_H_sub"/>
</dbReference>
<dbReference type="InterPro" id="IPR011053">
    <property type="entry name" value="Single_hybrid_motif"/>
</dbReference>
<dbReference type="NCBIfam" id="TIGR00527">
    <property type="entry name" value="gcvH"/>
    <property type="match status" value="1"/>
</dbReference>
<dbReference type="NCBIfam" id="NF002270">
    <property type="entry name" value="PRK01202.1"/>
    <property type="match status" value="1"/>
</dbReference>
<dbReference type="PANTHER" id="PTHR11715">
    <property type="entry name" value="GLYCINE CLEAVAGE SYSTEM H PROTEIN"/>
    <property type="match status" value="1"/>
</dbReference>
<dbReference type="PANTHER" id="PTHR11715:SF3">
    <property type="entry name" value="GLYCINE CLEAVAGE SYSTEM H PROTEIN-RELATED"/>
    <property type="match status" value="1"/>
</dbReference>
<dbReference type="Pfam" id="PF01597">
    <property type="entry name" value="GCV_H"/>
    <property type="match status" value="1"/>
</dbReference>
<dbReference type="SUPFAM" id="SSF51230">
    <property type="entry name" value="Single hybrid motif"/>
    <property type="match status" value="1"/>
</dbReference>
<dbReference type="PROSITE" id="PS50968">
    <property type="entry name" value="BIOTINYL_LIPOYL"/>
    <property type="match status" value="1"/>
</dbReference>
<dbReference type="PROSITE" id="PS00189">
    <property type="entry name" value="LIPOYL"/>
    <property type="match status" value="1"/>
</dbReference>
<protein>
    <recommendedName>
        <fullName evidence="1">Glycine cleavage system H protein</fullName>
    </recommendedName>
</protein>
<organism>
    <name type="scientific">Opitutus terrae (strain DSM 11246 / JCM 15787 / PB90-1)</name>
    <dbReference type="NCBI Taxonomy" id="452637"/>
    <lineage>
        <taxon>Bacteria</taxon>
        <taxon>Pseudomonadati</taxon>
        <taxon>Verrucomicrobiota</taxon>
        <taxon>Opitutia</taxon>
        <taxon>Opitutales</taxon>
        <taxon>Opitutaceae</taxon>
        <taxon>Opitutus</taxon>
    </lineage>
</organism>
<name>GCSH_OPITP</name>
<evidence type="ECO:0000255" key="1">
    <source>
        <dbReference type="HAMAP-Rule" id="MF_00272"/>
    </source>
</evidence>
<evidence type="ECO:0000255" key="2">
    <source>
        <dbReference type="PROSITE-ProRule" id="PRU01066"/>
    </source>
</evidence>
<feature type="chain" id="PRO_1000114533" description="Glycine cleavage system H protein">
    <location>
        <begin position="1"/>
        <end position="127"/>
    </location>
</feature>
<feature type="domain" description="Lipoyl-binding" evidence="2">
    <location>
        <begin position="24"/>
        <end position="106"/>
    </location>
</feature>
<feature type="modified residue" description="N6-lipoyllysine" evidence="1">
    <location>
        <position position="65"/>
    </location>
</feature>
<comment type="function">
    <text evidence="1">The glycine cleavage system catalyzes the degradation of glycine. The H protein shuttles the methylamine group of glycine from the P protein to the T protein.</text>
</comment>
<comment type="cofactor">
    <cofactor evidence="1">
        <name>(R)-lipoate</name>
        <dbReference type="ChEBI" id="CHEBI:83088"/>
    </cofactor>
    <text evidence="1">Binds 1 lipoyl cofactor covalently.</text>
</comment>
<comment type="subunit">
    <text evidence="1">The glycine cleavage system is composed of four proteins: P, T, L and H.</text>
</comment>
<comment type="similarity">
    <text evidence="1">Belongs to the GcvH family.</text>
</comment>
<gene>
    <name evidence="1" type="primary">gcvH</name>
    <name type="ordered locus">Oter_3363</name>
</gene>
<accession>B1ZU74</accession>